<proteinExistence type="evidence at protein level"/>
<evidence type="ECO:0000250" key="1">
    <source>
        <dbReference type="UniProtKB" id="P0ACC1"/>
    </source>
</evidence>
<evidence type="ECO:0000269" key="2">
    <source>
    </source>
</evidence>
<evidence type="ECO:0000303" key="3">
    <source>
    </source>
</evidence>
<evidence type="ECO:0000305" key="4"/>
<accession>P72542</accession>
<gene>
    <name evidence="3" type="primary">papM</name>
</gene>
<feature type="chain" id="PRO_0000453963" description="4-amino-L-phenylalanine/4-methylamino-L-phenylalanine methyltransferase">
    <location>
        <begin position="1"/>
        <end position="292"/>
    </location>
</feature>
<feature type="binding site" evidence="1">
    <location>
        <begin position="128"/>
        <end position="132"/>
    </location>
    <ligand>
        <name>S-adenosyl-L-methionine</name>
        <dbReference type="ChEBI" id="CHEBI:59789"/>
    </ligand>
</feature>
<name>PAPM_STRPR</name>
<dbReference type="EC" id="2.1.1.-" evidence="2"/>
<dbReference type="EMBL" id="U60417">
    <property type="protein sequence ID" value="AAC44869.1"/>
    <property type="molecule type" value="Genomic_DNA"/>
</dbReference>
<dbReference type="SMR" id="P72542"/>
<dbReference type="GO" id="GO:0003676">
    <property type="term" value="F:nucleic acid binding"/>
    <property type="evidence" value="ECO:0007669"/>
    <property type="project" value="InterPro"/>
</dbReference>
<dbReference type="GO" id="GO:0008276">
    <property type="term" value="F:protein methyltransferase activity"/>
    <property type="evidence" value="ECO:0007669"/>
    <property type="project" value="InterPro"/>
</dbReference>
<dbReference type="GO" id="GO:0009058">
    <property type="term" value="P:biosynthetic process"/>
    <property type="evidence" value="ECO:0007669"/>
    <property type="project" value="UniProtKB-ARBA"/>
</dbReference>
<dbReference type="GO" id="GO:0032259">
    <property type="term" value="P:methylation"/>
    <property type="evidence" value="ECO:0007669"/>
    <property type="project" value="UniProtKB-KW"/>
</dbReference>
<dbReference type="CDD" id="cd02440">
    <property type="entry name" value="AdoMet_MTases"/>
    <property type="match status" value="1"/>
</dbReference>
<dbReference type="Gene3D" id="1.10.8.10">
    <property type="entry name" value="DNA helicase RuvA subunit, C-terminal domain"/>
    <property type="match status" value="1"/>
</dbReference>
<dbReference type="Gene3D" id="3.40.50.150">
    <property type="entry name" value="Vaccinia Virus protein VP39"/>
    <property type="match status" value="1"/>
</dbReference>
<dbReference type="InterPro" id="IPR002052">
    <property type="entry name" value="DNA_methylase_N6_adenine_CS"/>
</dbReference>
<dbReference type="InterPro" id="IPR004556">
    <property type="entry name" value="HemK-like"/>
</dbReference>
<dbReference type="InterPro" id="IPR041698">
    <property type="entry name" value="Methyltransf_25"/>
</dbReference>
<dbReference type="InterPro" id="IPR050320">
    <property type="entry name" value="N5-glutamine_MTase"/>
</dbReference>
<dbReference type="InterPro" id="IPR040758">
    <property type="entry name" value="PrmC_N"/>
</dbReference>
<dbReference type="InterPro" id="IPR029063">
    <property type="entry name" value="SAM-dependent_MTases_sf"/>
</dbReference>
<dbReference type="NCBIfam" id="TIGR00536">
    <property type="entry name" value="hemK_fam"/>
    <property type="match status" value="1"/>
</dbReference>
<dbReference type="PANTHER" id="PTHR18895">
    <property type="entry name" value="HEMK METHYLTRANSFERASE"/>
    <property type="match status" value="1"/>
</dbReference>
<dbReference type="PANTHER" id="PTHR18895:SF74">
    <property type="entry name" value="MTRF1L RELEASE FACTOR GLUTAMINE METHYLTRANSFERASE"/>
    <property type="match status" value="1"/>
</dbReference>
<dbReference type="Pfam" id="PF13649">
    <property type="entry name" value="Methyltransf_25"/>
    <property type="match status" value="1"/>
</dbReference>
<dbReference type="Pfam" id="PF17827">
    <property type="entry name" value="PrmC_N"/>
    <property type="match status" value="1"/>
</dbReference>
<dbReference type="SUPFAM" id="SSF53335">
    <property type="entry name" value="S-adenosyl-L-methionine-dependent methyltransferases"/>
    <property type="match status" value="1"/>
</dbReference>
<sequence length="292" mass="30850">MTAAAPTLAQALDEATGQLTGAGITADAARADTRLLAAHACQVAPGDLDTCLAGPVPPRFWHYVRRRLTREPAERIVGHAYFMGHRFDLAPGVFVPKPETEEITRDAIARLEALVRRGTTAPLVVDLCAGPGTMAVTLARHVPAARVLGIELSQAAARAARRNARGTGARIVQGDARDAFPELSGTVDLVVTNPPYIPIGLRTSAPEVLEHDPPLALWAGEEGLGMIRAMERTAARLLAPGGVLLLEHGSYQLASVPALFRATGRWSHASSRPTCNDGCLTAVRNHTCAPPA</sequence>
<keyword id="KW-0903">Direct protein sequencing</keyword>
<keyword id="KW-0489">Methyltransferase</keyword>
<keyword id="KW-0949">S-adenosyl-L-methionine</keyword>
<keyword id="KW-0808">Transferase</keyword>
<comment type="function">
    <text evidence="2">Involved in pristinamycin I biosynthesis (PubMed:9044253). Catalyzes the SAM-dependent methylation of 4-amino-L-phenylalanine (PAPA) to 4-methylamino-L-phenylalanine (MMPAPA), and of MMPAPA to 4-dimethylamino-L-phenylalanine (DMPAPA) (PubMed:9044253).</text>
</comment>
<comment type="catalytic activity">
    <reaction evidence="2">
        <text>4-amino-L-phenylalanine + S-adenosyl-L-methionine = 4-methylamino-L-phenylalanine + S-adenosyl-L-homocysteine + H(+)</text>
        <dbReference type="Rhea" id="RHEA:67960"/>
        <dbReference type="ChEBI" id="CHEBI:15378"/>
        <dbReference type="ChEBI" id="CHEBI:57856"/>
        <dbReference type="ChEBI" id="CHEBI:59789"/>
        <dbReference type="ChEBI" id="CHEBI:143072"/>
        <dbReference type="ChEBI" id="CHEBI:176804"/>
    </reaction>
    <physiologicalReaction direction="left-to-right" evidence="2">
        <dbReference type="Rhea" id="RHEA:67961"/>
    </physiologicalReaction>
</comment>
<comment type="catalytic activity">
    <reaction evidence="2">
        <text>4-methylamino-L-phenylalanine + S-adenosyl-L-methionine = 4-dimethylamino-L-phenylalanine + S-adenosyl-L-homocysteine + H(+)</text>
        <dbReference type="Rhea" id="RHEA:67964"/>
        <dbReference type="ChEBI" id="CHEBI:15378"/>
        <dbReference type="ChEBI" id="CHEBI:57856"/>
        <dbReference type="ChEBI" id="CHEBI:59789"/>
        <dbReference type="ChEBI" id="CHEBI:176804"/>
        <dbReference type="ChEBI" id="CHEBI:176805"/>
    </reaction>
    <physiologicalReaction direction="left-to-right" evidence="2">
        <dbReference type="Rhea" id="RHEA:67965"/>
    </physiologicalReaction>
</comment>
<comment type="biophysicochemical properties">
    <kinetics>
        <KM evidence="2">0.24 mM for PAPA</KM>
        <KM evidence="2">0.53 mM for MMPAPA</KM>
        <KM evidence="2">0.1 mM for S-adenosyl-L-methionine (in the presence of PAPA)</KM>
        <KM evidence="2">0.12 mM for S-adenosyl-L-methionine (in the presence of MMPAPA)</KM>
        <Vmax evidence="2">55000.0 nmol/h/mg enzyme with PAPA as substrate</Vmax>
        <Vmax evidence="2">71000.0 nmol/h/mg enzyme with MMPAPA as substrate</Vmax>
        <Vmax evidence="2">52000.0 nmol/h/mg enzyme with S-adenosyl-L-methionine as substrate (in the presence of PAPA)</Vmax>
        <Vmax evidence="2">72000.0 nmol/h/mg enzyme with S-adenosyl-L-methionine as substrate (in the presence of MMPAPA)</Vmax>
    </kinetics>
</comment>
<comment type="pathway">
    <text evidence="2">Antibiotic biosynthesis.</text>
</comment>
<comment type="similarity">
    <text evidence="4">Belongs to the protein N5-glutamine methyltransferase family.</text>
</comment>
<protein>
    <recommendedName>
        <fullName evidence="4">4-amino-L-phenylalanine/4-methylamino-L-phenylalanine methyltransferase</fullName>
        <shortName evidence="4">PAPA/MMPAPA methyltransferase</shortName>
        <ecNumber evidence="2">2.1.1.-</ecNumber>
    </recommendedName>
    <alternativeName>
        <fullName evidence="4">SAM:PAPA/MMPAPA N-methyltransferase</fullName>
    </alternativeName>
</protein>
<organism>
    <name type="scientific">Streptomyces pristinaespiralis</name>
    <dbReference type="NCBI Taxonomy" id="38300"/>
    <lineage>
        <taxon>Bacteria</taxon>
        <taxon>Bacillati</taxon>
        <taxon>Actinomycetota</taxon>
        <taxon>Actinomycetes</taxon>
        <taxon>Kitasatosporales</taxon>
        <taxon>Streptomycetaceae</taxon>
        <taxon>Streptomyces</taxon>
    </lineage>
</organism>
<reference key="1">
    <citation type="journal article" date="1997" name="Mol. Microbiol.">
        <title>Identification and analysis of genes from Streptomyces pristinaespiralis encoding enzymes involved in the biosynthesis of the 4-dimethylamino-L-phenylalanine precursor of pristinamycin I.</title>
        <authorList>
            <person name="Blanc V."/>
            <person name="Gil P."/>
            <person name="Bamas-Jacques N."/>
            <person name="Lorenzon S."/>
            <person name="Zagorec M."/>
            <person name="Schleuniger J."/>
            <person name="Bisch D."/>
            <person name="Blanche F."/>
            <person name="Debussche L."/>
            <person name="Crouzet J."/>
            <person name="Thibaut D."/>
        </authorList>
    </citation>
    <scope>NUCLEOTIDE SEQUENCE [GENOMIC DNA]</scope>
    <scope>PROTEIN SEQUENCE OF 2-11</scope>
    <scope>FUNCTION</scope>
    <scope>CATALYTIC ACTIVITY</scope>
    <scope>BIOPHYSICOCHEMICAL PROPERTIES</scope>
    <scope>PATHWAY</scope>
    <source>
        <strain>SP92</strain>
    </source>
</reference>